<protein>
    <recommendedName>
        <fullName evidence="2">Peroxidase</fullName>
        <ecNumber evidence="1">1.11.1.7</ecNumber>
    </recommendedName>
</protein>
<keyword id="KW-0903">Direct protein sequencing</keyword>
<keyword id="KW-0560">Oxidoreductase</keyword>
<keyword id="KW-0575">Peroxidase</keyword>
<feature type="chain" id="PRO_0000416052" description="Peroxidase">
    <location>
        <begin position="1"/>
        <end position="9" status="greater than"/>
    </location>
</feature>
<feature type="non-terminal residue" evidence="2">
    <location>
        <position position="9"/>
    </location>
</feature>
<name>PERO_PLEPU</name>
<accession>B3EWG7</accession>
<evidence type="ECO:0000269" key="1">
    <source ref="1"/>
</evidence>
<evidence type="ECO:0000303" key="2">
    <source ref="1"/>
</evidence>
<reference key="1">
    <citation type="journal article" date="2019" name="Int. J. Pept. Res. Ther.">
        <title>A novel peroxidase from fresh fruiting bodies of the mushroom Pleurotus pulmonarius.</title>
        <authorList>
            <person name="Zou Y.J."/>
            <person name="Wang H.X."/>
            <person name="Zhang J.X."/>
        </authorList>
    </citation>
    <scope>PROTEIN SEQUENCE</scope>
    <scope>CATALYTIC ACTIVITY</scope>
    <scope>BIOPHYSICOCHEMICAL PROPERTIES</scope>
    <source>
        <tissue evidence="1">Fruiting body</tissue>
    </source>
</reference>
<comment type="catalytic activity">
    <reaction evidence="1">
        <text>2 a phenolic donor + H2O2 = 2 a phenolic radical donor + 2 H2O</text>
        <dbReference type="Rhea" id="RHEA:56136"/>
        <dbReference type="ChEBI" id="CHEBI:15377"/>
        <dbReference type="ChEBI" id="CHEBI:16240"/>
        <dbReference type="ChEBI" id="CHEBI:139520"/>
        <dbReference type="ChEBI" id="CHEBI:139521"/>
        <dbReference type="EC" id="1.11.1.7"/>
    </reaction>
</comment>
<comment type="biophysicochemical properties">
    <phDependence>
        <text evidence="1">Optimum pH is 4.0.</text>
    </phDependence>
    <temperatureDependence>
        <text evidence="1">Optimum temperature is 70 degrees Celsius.</text>
    </temperatureDependence>
</comment>
<dbReference type="EC" id="1.11.1.7" evidence="1"/>
<dbReference type="GO" id="GO:0140825">
    <property type="term" value="F:lactoperoxidase activity"/>
    <property type="evidence" value="ECO:0007669"/>
    <property type="project" value="UniProtKB-EC"/>
</dbReference>
<dbReference type="GO" id="GO:0004601">
    <property type="term" value="F:peroxidase activity"/>
    <property type="evidence" value="ECO:0000314"/>
    <property type="project" value="UniProtKB"/>
</dbReference>
<proteinExistence type="evidence at protein level"/>
<sequence length="9" mass="874">ADNPGDDGN</sequence>
<organism>
    <name type="scientific">Pleurotus pulmonarius</name>
    <name type="common">Indian oyster mushroom</name>
    <dbReference type="NCBI Taxonomy" id="28995"/>
    <lineage>
        <taxon>Eukaryota</taxon>
        <taxon>Fungi</taxon>
        <taxon>Dikarya</taxon>
        <taxon>Basidiomycota</taxon>
        <taxon>Agaricomycotina</taxon>
        <taxon>Agaricomycetes</taxon>
        <taxon>Agaricomycetidae</taxon>
        <taxon>Agaricales</taxon>
        <taxon>Pleurotineae</taxon>
        <taxon>Pleurotaceae</taxon>
        <taxon>Pleurotus</taxon>
    </lineage>
</organism>